<evidence type="ECO:0000250" key="1"/>
<evidence type="ECO:0000255" key="2">
    <source>
        <dbReference type="HAMAP-Rule" id="MF_00118"/>
    </source>
</evidence>
<feature type="chain" id="PRO_0000091388" description="Elongation factor Tu">
    <location>
        <begin position="1"/>
        <end position="410"/>
    </location>
</feature>
<feature type="domain" description="tr-type G">
    <location>
        <begin position="10"/>
        <end position="214"/>
    </location>
</feature>
<feature type="region of interest" description="G1" evidence="1">
    <location>
        <begin position="19"/>
        <end position="26"/>
    </location>
</feature>
<feature type="region of interest" description="G2" evidence="1">
    <location>
        <begin position="60"/>
        <end position="64"/>
    </location>
</feature>
<feature type="region of interest" description="G3" evidence="1">
    <location>
        <begin position="81"/>
        <end position="84"/>
    </location>
</feature>
<feature type="region of interest" description="G4" evidence="1">
    <location>
        <begin position="136"/>
        <end position="139"/>
    </location>
</feature>
<feature type="region of interest" description="G5" evidence="1">
    <location>
        <begin position="174"/>
        <end position="176"/>
    </location>
</feature>
<feature type="binding site" evidence="2">
    <location>
        <begin position="19"/>
        <end position="26"/>
    </location>
    <ligand>
        <name>GTP</name>
        <dbReference type="ChEBI" id="CHEBI:37565"/>
    </ligand>
</feature>
<feature type="binding site" evidence="2">
    <location>
        <position position="26"/>
    </location>
    <ligand>
        <name>Mg(2+)</name>
        <dbReference type="ChEBI" id="CHEBI:18420"/>
    </ligand>
</feature>
<feature type="binding site" evidence="2">
    <location>
        <begin position="81"/>
        <end position="85"/>
    </location>
    <ligand>
        <name>GTP</name>
        <dbReference type="ChEBI" id="CHEBI:37565"/>
    </ligand>
</feature>
<feature type="binding site" evidence="2">
    <location>
        <begin position="136"/>
        <end position="139"/>
    </location>
    <ligand>
        <name>GTP</name>
        <dbReference type="ChEBI" id="CHEBI:37565"/>
    </ligand>
</feature>
<accession>P13552</accession>
<proteinExistence type="inferred from homology"/>
<organism>
    <name type="scientific">Arthrospira platensis</name>
    <name type="common">Spirulina platensis</name>
    <dbReference type="NCBI Taxonomy" id="118562"/>
    <lineage>
        <taxon>Bacteria</taxon>
        <taxon>Bacillati</taxon>
        <taxon>Cyanobacteriota</taxon>
        <taxon>Cyanophyceae</taxon>
        <taxon>Oscillatoriophycideae</taxon>
        <taxon>Oscillatoriales</taxon>
        <taxon>Microcoleaceae</taxon>
        <taxon>Arthrospira</taxon>
    </lineage>
</organism>
<gene>
    <name evidence="2" type="primary">tuf</name>
</gene>
<protein>
    <recommendedName>
        <fullName evidence="2">Elongation factor Tu</fullName>
        <shortName evidence="2">EF-Tu</shortName>
        <ecNumber evidence="2">3.6.5.3</ecNumber>
    </recommendedName>
</protein>
<comment type="function">
    <text evidence="2">GTP hydrolase that promotes the GTP-dependent binding of aminoacyl-tRNA to the A-site of ribosomes during protein biosynthesis.</text>
</comment>
<comment type="catalytic activity">
    <reaction evidence="2">
        <text>GTP + H2O = GDP + phosphate + H(+)</text>
        <dbReference type="Rhea" id="RHEA:19669"/>
        <dbReference type="ChEBI" id="CHEBI:15377"/>
        <dbReference type="ChEBI" id="CHEBI:15378"/>
        <dbReference type="ChEBI" id="CHEBI:37565"/>
        <dbReference type="ChEBI" id="CHEBI:43474"/>
        <dbReference type="ChEBI" id="CHEBI:58189"/>
        <dbReference type="EC" id="3.6.5.3"/>
    </reaction>
    <physiologicalReaction direction="left-to-right" evidence="2">
        <dbReference type="Rhea" id="RHEA:19670"/>
    </physiologicalReaction>
</comment>
<comment type="subunit">
    <text evidence="2">Monomer.</text>
</comment>
<comment type="subcellular location">
    <subcellularLocation>
        <location evidence="2">Cytoplasm</location>
    </subcellularLocation>
</comment>
<comment type="similarity">
    <text evidence="2">Belongs to the TRAFAC class translation factor GTPase superfamily. Classic translation factor GTPase family. EF-Tu/EF-1A subfamily.</text>
</comment>
<reference key="1">
    <citation type="journal article" date="1989" name="Mol. Gen. Genet.">
        <title>Characterization of the str operon genes from Spirulina platensis and their evolutionary relationship to those of other prokaryotes.</title>
        <authorList>
            <person name="Buttarelli F.R."/>
            <person name="Calogero R.A."/>
            <person name="Tiboni O."/>
            <person name="Gualerzi C.O."/>
            <person name="Pon C.L."/>
        </authorList>
    </citation>
    <scope>NUCLEOTIDE SEQUENCE [GENOMIC DNA]</scope>
</reference>
<reference key="2">
    <citation type="journal article" date="1993" name="J. Gen. Microbiol.">
        <title>The chromosomal location of genes for elongation factor Tu and ribosomal protein S10 in the cyanobacterium Spirulina platensis provides clues to the ancestral organization of the str and S10 operons in prokaryotes.</title>
        <authorList>
            <person name="Sanangelantoni A.M."/>
            <person name="Tiboni O."/>
        </authorList>
    </citation>
    <scope>NUCLEOTIDE SEQUENCE [GENOMIC DNA] OF 383-410</scope>
</reference>
<dbReference type="EC" id="3.6.5.3" evidence="2"/>
<dbReference type="EMBL" id="X15646">
    <property type="protein sequence ID" value="CAA33673.1"/>
    <property type="molecule type" value="Genomic_DNA"/>
</dbReference>
<dbReference type="EMBL" id="Z21676">
    <property type="protein sequence ID" value="CAA79774.1"/>
    <property type="molecule type" value="Genomic_DNA"/>
</dbReference>
<dbReference type="PIR" id="S04391">
    <property type="entry name" value="S04391"/>
</dbReference>
<dbReference type="SMR" id="P13552"/>
<dbReference type="GO" id="GO:0005829">
    <property type="term" value="C:cytosol"/>
    <property type="evidence" value="ECO:0007669"/>
    <property type="project" value="TreeGrafter"/>
</dbReference>
<dbReference type="GO" id="GO:0005525">
    <property type="term" value="F:GTP binding"/>
    <property type="evidence" value="ECO:0007669"/>
    <property type="project" value="UniProtKB-UniRule"/>
</dbReference>
<dbReference type="GO" id="GO:0003924">
    <property type="term" value="F:GTPase activity"/>
    <property type="evidence" value="ECO:0007669"/>
    <property type="project" value="InterPro"/>
</dbReference>
<dbReference type="GO" id="GO:0003746">
    <property type="term" value="F:translation elongation factor activity"/>
    <property type="evidence" value="ECO:0007669"/>
    <property type="project" value="UniProtKB-UniRule"/>
</dbReference>
<dbReference type="CDD" id="cd01884">
    <property type="entry name" value="EF_Tu"/>
    <property type="match status" value="1"/>
</dbReference>
<dbReference type="CDD" id="cd03697">
    <property type="entry name" value="EFTU_II"/>
    <property type="match status" value="1"/>
</dbReference>
<dbReference type="CDD" id="cd03707">
    <property type="entry name" value="EFTU_III"/>
    <property type="match status" value="1"/>
</dbReference>
<dbReference type="FunFam" id="2.40.30.10:FF:000001">
    <property type="entry name" value="Elongation factor Tu"/>
    <property type="match status" value="1"/>
</dbReference>
<dbReference type="FunFam" id="2.40.30.10:FF:000046">
    <property type="entry name" value="Elongation factor Tu"/>
    <property type="match status" value="1"/>
</dbReference>
<dbReference type="FunFam" id="3.40.50.300:FF:000003">
    <property type="entry name" value="Elongation factor Tu"/>
    <property type="match status" value="1"/>
</dbReference>
<dbReference type="Gene3D" id="3.40.50.300">
    <property type="entry name" value="P-loop containing nucleotide triphosphate hydrolases"/>
    <property type="match status" value="1"/>
</dbReference>
<dbReference type="Gene3D" id="2.40.30.10">
    <property type="entry name" value="Translation factors"/>
    <property type="match status" value="2"/>
</dbReference>
<dbReference type="HAMAP" id="MF_00118_B">
    <property type="entry name" value="EF_Tu_B"/>
    <property type="match status" value="1"/>
</dbReference>
<dbReference type="InterPro" id="IPR041709">
    <property type="entry name" value="EF-Tu_GTP-bd"/>
</dbReference>
<dbReference type="InterPro" id="IPR050055">
    <property type="entry name" value="EF-Tu_GTPase"/>
</dbReference>
<dbReference type="InterPro" id="IPR004161">
    <property type="entry name" value="EFTu-like_2"/>
</dbReference>
<dbReference type="InterPro" id="IPR033720">
    <property type="entry name" value="EFTU_2"/>
</dbReference>
<dbReference type="InterPro" id="IPR031157">
    <property type="entry name" value="G_TR_CS"/>
</dbReference>
<dbReference type="InterPro" id="IPR027417">
    <property type="entry name" value="P-loop_NTPase"/>
</dbReference>
<dbReference type="InterPro" id="IPR005225">
    <property type="entry name" value="Small_GTP-bd"/>
</dbReference>
<dbReference type="InterPro" id="IPR000795">
    <property type="entry name" value="T_Tr_GTP-bd_dom"/>
</dbReference>
<dbReference type="InterPro" id="IPR009000">
    <property type="entry name" value="Transl_B-barrel_sf"/>
</dbReference>
<dbReference type="InterPro" id="IPR009001">
    <property type="entry name" value="Transl_elong_EF1A/Init_IF2_C"/>
</dbReference>
<dbReference type="InterPro" id="IPR004541">
    <property type="entry name" value="Transl_elong_EFTu/EF1A_bac/org"/>
</dbReference>
<dbReference type="InterPro" id="IPR004160">
    <property type="entry name" value="Transl_elong_EFTu/EF1A_C"/>
</dbReference>
<dbReference type="NCBIfam" id="TIGR00485">
    <property type="entry name" value="EF-Tu"/>
    <property type="match status" value="1"/>
</dbReference>
<dbReference type="NCBIfam" id="NF000766">
    <property type="entry name" value="PRK00049.1"/>
    <property type="match status" value="1"/>
</dbReference>
<dbReference type="NCBIfam" id="NF009372">
    <property type="entry name" value="PRK12735.1"/>
    <property type="match status" value="1"/>
</dbReference>
<dbReference type="NCBIfam" id="NF009373">
    <property type="entry name" value="PRK12736.1"/>
    <property type="match status" value="1"/>
</dbReference>
<dbReference type="NCBIfam" id="TIGR00231">
    <property type="entry name" value="small_GTP"/>
    <property type="match status" value="1"/>
</dbReference>
<dbReference type="PANTHER" id="PTHR43721:SF22">
    <property type="entry name" value="ELONGATION FACTOR TU, MITOCHONDRIAL"/>
    <property type="match status" value="1"/>
</dbReference>
<dbReference type="PANTHER" id="PTHR43721">
    <property type="entry name" value="ELONGATION FACTOR TU-RELATED"/>
    <property type="match status" value="1"/>
</dbReference>
<dbReference type="Pfam" id="PF00009">
    <property type="entry name" value="GTP_EFTU"/>
    <property type="match status" value="1"/>
</dbReference>
<dbReference type="Pfam" id="PF03144">
    <property type="entry name" value="GTP_EFTU_D2"/>
    <property type="match status" value="1"/>
</dbReference>
<dbReference type="Pfam" id="PF03143">
    <property type="entry name" value="GTP_EFTU_D3"/>
    <property type="match status" value="1"/>
</dbReference>
<dbReference type="PRINTS" id="PR00315">
    <property type="entry name" value="ELONGATNFCT"/>
</dbReference>
<dbReference type="SUPFAM" id="SSF50465">
    <property type="entry name" value="EF-Tu/eEF-1alpha/eIF2-gamma C-terminal domain"/>
    <property type="match status" value="1"/>
</dbReference>
<dbReference type="SUPFAM" id="SSF52540">
    <property type="entry name" value="P-loop containing nucleoside triphosphate hydrolases"/>
    <property type="match status" value="1"/>
</dbReference>
<dbReference type="SUPFAM" id="SSF50447">
    <property type="entry name" value="Translation proteins"/>
    <property type="match status" value="1"/>
</dbReference>
<dbReference type="PROSITE" id="PS00301">
    <property type="entry name" value="G_TR_1"/>
    <property type="match status" value="1"/>
</dbReference>
<dbReference type="PROSITE" id="PS51722">
    <property type="entry name" value="G_TR_2"/>
    <property type="match status" value="1"/>
</dbReference>
<sequence length="410" mass="44758">MARAKFERNKPHVNIGTIGHVDHGKTTLTAAITMTLAASGGAKARKYDDIDAAPEEKQRGITINTAHVEYETEQRHYAHVDCPGHADYVKNMITGAAQMDGAILVVSAADGPMPQTREHILLAKQVGVPSIVVFLNKADMVDDEELLELVELEVRELLSSYDFPGDDIPIVSGSALKALDFLTENPKTTRGENDWVDKIHALMDEVDAYIPTPERDIDKGLLDGLWEDVFSITGRGTVSTAGIERGKVKVGDTVELIGIKDTRTTTVTGAEMFQKTLEEGMAGDNVGLLLRGIQKNDVQRGMVIAKPKSITPHTKFEAEVYILKKEEGGRHTPFFKGYRPQFYVRTTDVTGTIDEFTADDGSTPEMVIPGDRINMTVQLICPIAIEQGMRFAIREGGRTVGAGVVAKILA</sequence>
<keyword id="KW-0963">Cytoplasm</keyword>
<keyword id="KW-0251">Elongation factor</keyword>
<keyword id="KW-0342">GTP-binding</keyword>
<keyword id="KW-0378">Hydrolase</keyword>
<keyword id="KW-0460">Magnesium</keyword>
<keyword id="KW-0479">Metal-binding</keyword>
<keyword id="KW-0547">Nucleotide-binding</keyword>
<keyword id="KW-0648">Protein biosynthesis</keyword>
<name>EFTU_ARTPT</name>